<evidence type="ECO:0000250" key="1">
    <source>
        <dbReference type="UniProtKB" id="P29022"/>
    </source>
</evidence>
<evidence type="ECO:0000255" key="2"/>
<evidence type="ECO:0000255" key="3">
    <source>
        <dbReference type="PROSITE-ProRule" id="PRU00261"/>
    </source>
</evidence>
<evidence type="ECO:0000269" key="4">
    <source>
    </source>
</evidence>
<evidence type="ECO:0000305" key="5"/>
<proteinExistence type="evidence at transcript level"/>
<feature type="signal peptide" evidence="2">
    <location>
        <begin position="1"/>
        <end position="20"/>
    </location>
</feature>
<feature type="chain" id="PRO_0000005290" description="Endochitinase CH25">
    <location>
        <begin position="21"/>
        <end position="322"/>
    </location>
</feature>
<feature type="domain" description="Chitin-binding type-1" evidence="3">
    <location>
        <begin position="21"/>
        <end position="62"/>
    </location>
</feature>
<feature type="active site" description="Proton donor" evidence="1">
    <location>
        <position position="136"/>
    </location>
</feature>
<feature type="disulfide bond" evidence="3">
    <location>
        <begin position="23"/>
        <end position="38"/>
    </location>
</feature>
<feature type="disulfide bond" evidence="3">
    <location>
        <begin position="32"/>
        <end position="44"/>
    </location>
</feature>
<feature type="disulfide bond" evidence="3">
    <location>
        <begin position="37"/>
        <end position="51"/>
    </location>
</feature>
<feature type="disulfide bond" evidence="3">
    <location>
        <begin position="56"/>
        <end position="60"/>
    </location>
</feature>
<feature type="disulfide bond" evidence="3">
    <location>
        <begin position="92"/>
        <end position="154"/>
    </location>
</feature>
<feature type="disulfide bond" evidence="3">
    <location>
        <begin position="166"/>
        <end position="174"/>
    </location>
</feature>
<feature type="disulfide bond" evidence="3">
    <location>
        <begin position="273"/>
        <end position="305"/>
    </location>
</feature>
<protein>
    <recommendedName>
        <fullName>Endochitinase CH25</fullName>
        <ecNumber>3.2.1.14</ecNumber>
    </recommendedName>
</protein>
<keyword id="KW-0119">Carbohydrate metabolism</keyword>
<keyword id="KW-0146">Chitin degradation</keyword>
<keyword id="KW-0147">Chitin-binding</keyword>
<keyword id="KW-1015">Disulfide bond</keyword>
<keyword id="KW-0326">Glycosidase</keyword>
<keyword id="KW-0378">Hydrolase</keyword>
<keyword id="KW-0624">Polysaccharide degradation</keyword>
<keyword id="KW-0732">Signal</keyword>
<dbReference type="EC" id="3.2.1.14"/>
<dbReference type="EMBL" id="M95835">
    <property type="protein sequence ID" value="AAA32986.1"/>
    <property type="molecule type" value="Genomic_DNA"/>
</dbReference>
<dbReference type="PIR" id="S59953">
    <property type="entry name" value="S59953"/>
</dbReference>
<dbReference type="RefSeq" id="NP_001412519.1">
    <property type="nucleotide sequence ID" value="NM_001425590.1"/>
</dbReference>
<dbReference type="RefSeq" id="XP_013731720.1">
    <property type="nucleotide sequence ID" value="XM_013876266.1"/>
</dbReference>
<dbReference type="SMR" id="Q09023"/>
<dbReference type="CAZy" id="CBM18">
    <property type="family name" value="Carbohydrate-Binding Module Family 18"/>
</dbReference>
<dbReference type="CAZy" id="GH19">
    <property type="family name" value="Glycoside Hydrolase Family 19"/>
</dbReference>
<dbReference type="GeneID" id="106435387"/>
<dbReference type="KEGG" id="bna:106435387"/>
<dbReference type="OrthoDB" id="5985073at2759"/>
<dbReference type="GO" id="GO:0008061">
    <property type="term" value="F:chitin binding"/>
    <property type="evidence" value="ECO:0007669"/>
    <property type="project" value="UniProtKB-KW"/>
</dbReference>
<dbReference type="GO" id="GO:0008843">
    <property type="term" value="F:endochitinase activity"/>
    <property type="evidence" value="ECO:0007669"/>
    <property type="project" value="UniProtKB-EC"/>
</dbReference>
<dbReference type="GO" id="GO:0016998">
    <property type="term" value="P:cell wall macromolecule catabolic process"/>
    <property type="evidence" value="ECO:0007669"/>
    <property type="project" value="InterPro"/>
</dbReference>
<dbReference type="GO" id="GO:0006032">
    <property type="term" value="P:chitin catabolic process"/>
    <property type="evidence" value="ECO:0007669"/>
    <property type="project" value="UniProtKB-KW"/>
</dbReference>
<dbReference type="GO" id="GO:0000272">
    <property type="term" value="P:polysaccharide catabolic process"/>
    <property type="evidence" value="ECO:0007669"/>
    <property type="project" value="UniProtKB-KW"/>
</dbReference>
<dbReference type="CDD" id="cd00325">
    <property type="entry name" value="chitinase_GH19"/>
    <property type="match status" value="1"/>
</dbReference>
<dbReference type="CDD" id="cd06921">
    <property type="entry name" value="ChtBD1_GH19_hevein"/>
    <property type="match status" value="1"/>
</dbReference>
<dbReference type="FunFam" id="3.30.60.10:FF:000001">
    <property type="entry name" value="Basic endochitinase"/>
    <property type="match status" value="1"/>
</dbReference>
<dbReference type="FunFam" id="3.30.20.10:FF:000001">
    <property type="entry name" value="Endochitinase (Chitinase)"/>
    <property type="match status" value="1"/>
</dbReference>
<dbReference type="Gene3D" id="1.10.530.10">
    <property type="match status" value="1"/>
</dbReference>
<dbReference type="Gene3D" id="3.30.20.10">
    <property type="entry name" value="Endochitinase, domain 2"/>
    <property type="match status" value="1"/>
</dbReference>
<dbReference type="Gene3D" id="3.30.60.10">
    <property type="entry name" value="Endochitinase-like"/>
    <property type="match status" value="1"/>
</dbReference>
<dbReference type="InterPro" id="IPR001002">
    <property type="entry name" value="Chitin-bd_1"/>
</dbReference>
<dbReference type="InterPro" id="IPR018371">
    <property type="entry name" value="Chitin-binding_1_CS"/>
</dbReference>
<dbReference type="InterPro" id="IPR036861">
    <property type="entry name" value="Endochitinase-like_sf"/>
</dbReference>
<dbReference type="InterPro" id="IPR016283">
    <property type="entry name" value="Glyco_hydro_19"/>
</dbReference>
<dbReference type="InterPro" id="IPR000726">
    <property type="entry name" value="Glyco_hydro_19_cat"/>
</dbReference>
<dbReference type="InterPro" id="IPR023346">
    <property type="entry name" value="Lysozyme-like_dom_sf"/>
</dbReference>
<dbReference type="PANTHER" id="PTHR22595:SF171">
    <property type="entry name" value="BASIC ENDOCHITINASE B"/>
    <property type="match status" value="1"/>
</dbReference>
<dbReference type="PANTHER" id="PTHR22595">
    <property type="entry name" value="CHITINASE-RELATED"/>
    <property type="match status" value="1"/>
</dbReference>
<dbReference type="Pfam" id="PF00187">
    <property type="entry name" value="Chitin_bind_1"/>
    <property type="match status" value="1"/>
</dbReference>
<dbReference type="Pfam" id="PF00182">
    <property type="entry name" value="Glyco_hydro_19"/>
    <property type="match status" value="1"/>
</dbReference>
<dbReference type="PIRSF" id="PIRSF001060">
    <property type="entry name" value="Endochitinase"/>
    <property type="match status" value="1"/>
</dbReference>
<dbReference type="PRINTS" id="PR00451">
    <property type="entry name" value="CHITINBINDNG"/>
</dbReference>
<dbReference type="SMART" id="SM00270">
    <property type="entry name" value="ChtBD1"/>
    <property type="match status" value="1"/>
</dbReference>
<dbReference type="SUPFAM" id="SSF53955">
    <property type="entry name" value="Lysozyme-like"/>
    <property type="match status" value="1"/>
</dbReference>
<dbReference type="SUPFAM" id="SSF57016">
    <property type="entry name" value="Plant lectins/antimicrobial peptides"/>
    <property type="match status" value="1"/>
</dbReference>
<dbReference type="PROSITE" id="PS00026">
    <property type="entry name" value="CHIT_BIND_I_1"/>
    <property type="match status" value="1"/>
</dbReference>
<dbReference type="PROSITE" id="PS50941">
    <property type="entry name" value="CHIT_BIND_I_2"/>
    <property type="match status" value="1"/>
</dbReference>
<dbReference type="PROSITE" id="PS00773">
    <property type="entry name" value="CHITINASE_19_1"/>
    <property type="match status" value="1"/>
</dbReference>
<dbReference type="PROSITE" id="PS00774">
    <property type="entry name" value="CHITINASE_19_2"/>
    <property type="match status" value="1"/>
</dbReference>
<comment type="catalytic activity">
    <reaction>
        <text>Random endo-hydrolysis of N-acetyl-beta-D-glucosaminide (1-&gt;4)-beta-linkages in chitin and chitodextrins.</text>
        <dbReference type="EC" id="3.2.1.14"/>
    </reaction>
</comment>
<comment type="tissue specificity">
    <text evidence="4">High expression in roots, moderate in floral tissues and low in stems and leaves.</text>
</comment>
<comment type="induction">
    <text evidence="4">In roots by wounding and ethephon.</text>
</comment>
<comment type="similarity">
    <text evidence="5">Belongs to the glycosyl hydrolase 19 family. Chitinase class I subfamily.</text>
</comment>
<reference key="1">
    <citation type="journal article" date="1993" name="Plant Physiol.">
        <title>Nucleotide sequence of a Brassica napus endochitinase gene.</title>
        <authorList>
            <person name="Hamel F."/>
            <person name="Bellemare G."/>
        </authorList>
    </citation>
    <scope>NUCLEOTIDE SEQUENCE [GENOMIC DNA]</scope>
</reference>
<reference key="2">
    <citation type="journal article" date="1995" name="Biochim. Biophys. Acta">
        <title>Characterization of a class I chitinase gene and of wound-inducible, root and flower-specific chitinase expression in Brassica napus.</title>
        <authorList>
            <person name="Hamel F."/>
            <person name="Bellemare G."/>
        </authorList>
    </citation>
    <scope>NUCLEOTIDE SEQUENCE [GENOMIC DNA]</scope>
    <scope>TISSUE SPECIFICITY</scope>
    <scope>INDUCTION</scope>
    <source>
        <strain>cv. Westar</strain>
    </source>
</reference>
<organism>
    <name type="scientific">Brassica napus</name>
    <name type="common">Rape</name>
    <dbReference type="NCBI Taxonomy" id="3708"/>
    <lineage>
        <taxon>Eukaryota</taxon>
        <taxon>Viridiplantae</taxon>
        <taxon>Streptophyta</taxon>
        <taxon>Embryophyta</taxon>
        <taxon>Tracheophyta</taxon>
        <taxon>Spermatophyta</taxon>
        <taxon>Magnoliopsida</taxon>
        <taxon>eudicotyledons</taxon>
        <taxon>Gunneridae</taxon>
        <taxon>Pentapetalae</taxon>
        <taxon>rosids</taxon>
        <taxon>malvids</taxon>
        <taxon>Brassicales</taxon>
        <taxon>Brassicaceae</taxon>
        <taxon>Brassiceae</taxon>
        <taxon>Brassica</taxon>
    </lineage>
</organism>
<name>CHI2_BRANA</name>
<accession>Q09023</accession>
<sequence length="322" mass="34816">MKSCLLLFLIFSFLLSFSLAEQCGRQAGGALCPNGLCCSEFGWCGDTEAYCKQPGCQSQCGGTPPGPTGDLSGIISRSQFDDMLKHRNDNACPARGFYTYDAFINAAKSFPGFGTTGDTATRKKEIAAFFGQTSHETTGGWATAPDGPYSWGYCFKQEQNPSSNYCSPSAEWPCASGKSYYGRGPMQLSWNYNYGQCGRAIGSDLLNNPDLVSNDPVIAFKAAIWFWMTPQSPKPSCHAVIVGQWQPSDADRAAGRVPGYGVITNIINGGLECGRGQDARVADRIGFYQRYCNILGVNPGGNLDCYNQRSFASVNFFLDAAI</sequence>